<comment type="function">
    <text evidence="1">Catalyzes the last two steps in the biosynthesis of 5-methylaminomethyl-2-thiouridine (mnm(5)s(2)U) at the wobble position (U34) in tRNA. Catalyzes the FAD-dependent demodification of cmnm(5)s(2)U34 to nm(5)s(2)U34, followed by the transfer of a methyl group from S-adenosyl-L-methionine to nm(5)s(2)U34, to form mnm(5)s(2)U34.</text>
</comment>
<comment type="catalytic activity">
    <reaction evidence="1">
        <text>5-aminomethyl-2-thiouridine(34) in tRNA + S-adenosyl-L-methionine = 5-methylaminomethyl-2-thiouridine(34) in tRNA + S-adenosyl-L-homocysteine + H(+)</text>
        <dbReference type="Rhea" id="RHEA:19569"/>
        <dbReference type="Rhea" id="RHEA-COMP:10195"/>
        <dbReference type="Rhea" id="RHEA-COMP:10197"/>
        <dbReference type="ChEBI" id="CHEBI:15378"/>
        <dbReference type="ChEBI" id="CHEBI:57856"/>
        <dbReference type="ChEBI" id="CHEBI:59789"/>
        <dbReference type="ChEBI" id="CHEBI:74454"/>
        <dbReference type="ChEBI" id="CHEBI:74455"/>
        <dbReference type="EC" id="2.1.1.61"/>
    </reaction>
</comment>
<comment type="cofactor">
    <cofactor evidence="1">
        <name>FAD</name>
        <dbReference type="ChEBI" id="CHEBI:57692"/>
    </cofactor>
</comment>
<comment type="subcellular location">
    <subcellularLocation>
        <location evidence="1">Cytoplasm</location>
    </subcellularLocation>
</comment>
<comment type="similarity">
    <text evidence="1">In the N-terminal section; belongs to the methyltransferase superfamily. tRNA (mnm(5)s(2)U34)-methyltransferase family.</text>
</comment>
<comment type="similarity">
    <text evidence="1">In the C-terminal section; belongs to the DAO family.</text>
</comment>
<comment type="sequence caution" evidence="2">
    <conflict type="erroneous initiation">
        <sequence resource="EMBL-CDS" id="ABC38479"/>
    </conflict>
</comment>
<protein>
    <recommendedName>
        <fullName evidence="1">tRNA 5-methylaminomethyl-2-thiouridine biosynthesis bifunctional protein MnmC</fullName>
        <shortName evidence="1">tRNA mnm(5)s(2)U biosynthesis bifunctional protein</shortName>
    </recommendedName>
    <domain>
        <recommendedName>
            <fullName evidence="1">tRNA (mnm(5)s(2)U34)-methyltransferase</fullName>
            <ecNumber evidence="1">2.1.1.61</ecNumber>
        </recommendedName>
    </domain>
    <domain>
        <recommendedName>
            <fullName evidence="1">FAD-dependent cmnm(5)s(2)U34 oxidoreductase</fullName>
            <ecNumber evidence="1">1.5.-.-</ecNumber>
        </recommendedName>
    </domain>
</protein>
<feature type="chain" id="PRO_0000347964" description="tRNA 5-methylaminomethyl-2-thiouridine biosynthesis bifunctional protein MnmC">
    <location>
        <begin position="1"/>
        <end position="654"/>
    </location>
</feature>
<feature type="region of interest" description="tRNA (mnm(5)s(2)U34)-methyltransferase">
    <location>
        <begin position="1"/>
        <end position="236"/>
    </location>
</feature>
<feature type="region of interest" description="FAD-dependent cmnm(5)s(2)U34 oxidoreductase">
    <location>
        <begin position="260"/>
        <end position="654"/>
    </location>
</feature>
<proteinExistence type="inferred from homology"/>
<accession>Q2T2K1</accession>
<organism>
    <name type="scientific">Burkholderia thailandensis (strain ATCC 700388 / DSM 13276 / CCUG 48851 / CIP 106301 / E264)</name>
    <dbReference type="NCBI Taxonomy" id="271848"/>
    <lineage>
        <taxon>Bacteria</taxon>
        <taxon>Pseudomonadati</taxon>
        <taxon>Pseudomonadota</taxon>
        <taxon>Betaproteobacteria</taxon>
        <taxon>Burkholderiales</taxon>
        <taxon>Burkholderiaceae</taxon>
        <taxon>Burkholderia</taxon>
        <taxon>pseudomallei group</taxon>
    </lineage>
</organism>
<name>MNMC_BURTA</name>
<evidence type="ECO:0000255" key="1">
    <source>
        <dbReference type="HAMAP-Rule" id="MF_01102"/>
    </source>
</evidence>
<evidence type="ECO:0000305" key="2"/>
<dbReference type="EC" id="2.1.1.61" evidence="1"/>
<dbReference type="EC" id="1.5.-.-" evidence="1"/>
<dbReference type="EMBL" id="CP000086">
    <property type="protein sequence ID" value="ABC38479.1"/>
    <property type="status" value="ALT_INIT"/>
    <property type="molecule type" value="Genomic_DNA"/>
</dbReference>
<dbReference type="RefSeq" id="WP_025404045.1">
    <property type="nucleotide sequence ID" value="NC_007651.1"/>
</dbReference>
<dbReference type="SMR" id="Q2T2K1"/>
<dbReference type="GeneID" id="45119776"/>
<dbReference type="KEGG" id="bte:BTH_I0003"/>
<dbReference type="HOGENOM" id="CLU_022427_1_0_4"/>
<dbReference type="Proteomes" id="UP000001930">
    <property type="component" value="Chromosome I"/>
</dbReference>
<dbReference type="GO" id="GO:0005737">
    <property type="term" value="C:cytoplasm"/>
    <property type="evidence" value="ECO:0007669"/>
    <property type="project" value="UniProtKB-SubCell"/>
</dbReference>
<dbReference type="GO" id="GO:0050660">
    <property type="term" value="F:flavin adenine dinucleotide binding"/>
    <property type="evidence" value="ECO:0007669"/>
    <property type="project" value="UniProtKB-UniRule"/>
</dbReference>
<dbReference type="GO" id="GO:0016645">
    <property type="term" value="F:oxidoreductase activity, acting on the CH-NH group of donors"/>
    <property type="evidence" value="ECO:0007669"/>
    <property type="project" value="InterPro"/>
</dbReference>
<dbReference type="GO" id="GO:0004808">
    <property type="term" value="F:tRNA (5-methylaminomethyl-2-thiouridylate)(34)-methyltransferase activity"/>
    <property type="evidence" value="ECO:0007669"/>
    <property type="project" value="UniProtKB-EC"/>
</dbReference>
<dbReference type="GO" id="GO:0032259">
    <property type="term" value="P:methylation"/>
    <property type="evidence" value="ECO:0007669"/>
    <property type="project" value="UniProtKB-KW"/>
</dbReference>
<dbReference type="GO" id="GO:0002097">
    <property type="term" value="P:tRNA wobble base modification"/>
    <property type="evidence" value="ECO:0007669"/>
    <property type="project" value="UniProtKB-UniRule"/>
</dbReference>
<dbReference type="Gene3D" id="3.30.9.10">
    <property type="entry name" value="D-Amino Acid Oxidase, subunit A, domain 2"/>
    <property type="match status" value="1"/>
</dbReference>
<dbReference type="Gene3D" id="3.50.50.60">
    <property type="entry name" value="FAD/NAD(P)-binding domain"/>
    <property type="match status" value="1"/>
</dbReference>
<dbReference type="Gene3D" id="3.40.50.150">
    <property type="entry name" value="Vaccinia Virus protein VP39"/>
    <property type="match status" value="1"/>
</dbReference>
<dbReference type="HAMAP" id="MF_01102">
    <property type="entry name" value="MnmC"/>
    <property type="match status" value="1"/>
</dbReference>
<dbReference type="InterPro" id="IPR006076">
    <property type="entry name" value="FAD-dep_OxRdtase"/>
</dbReference>
<dbReference type="InterPro" id="IPR036188">
    <property type="entry name" value="FAD/NAD-bd_sf"/>
</dbReference>
<dbReference type="InterPro" id="IPR008471">
    <property type="entry name" value="MnmC-like_methylTransf"/>
</dbReference>
<dbReference type="InterPro" id="IPR029063">
    <property type="entry name" value="SAM-dependent_MTases_sf"/>
</dbReference>
<dbReference type="InterPro" id="IPR023032">
    <property type="entry name" value="tRNA_MAMT_biosynth_bifunc_MnmC"/>
</dbReference>
<dbReference type="InterPro" id="IPR047785">
    <property type="entry name" value="tRNA_MNMC2"/>
</dbReference>
<dbReference type="InterPro" id="IPR017610">
    <property type="entry name" value="tRNA_S-uridine_synth_MnmC_C"/>
</dbReference>
<dbReference type="NCBIfam" id="TIGR03197">
    <property type="entry name" value="MnmC_Cterm"/>
    <property type="match status" value="1"/>
</dbReference>
<dbReference type="NCBIfam" id="NF002481">
    <property type="entry name" value="PRK01747.1-2"/>
    <property type="match status" value="1"/>
</dbReference>
<dbReference type="NCBIfam" id="NF002483">
    <property type="entry name" value="PRK01747.1-4"/>
    <property type="match status" value="1"/>
</dbReference>
<dbReference type="NCBIfam" id="NF033855">
    <property type="entry name" value="tRNA_MNMC2"/>
    <property type="match status" value="1"/>
</dbReference>
<dbReference type="PANTHER" id="PTHR13847">
    <property type="entry name" value="SARCOSINE DEHYDROGENASE-RELATED"/>
    <property type="match status" value="1"/>
</dbReference>
<dbReference type="PANTHER" id="PTHR13847:SF283">
    <property type="entry name" value="TRNA 5-METHYLAMINOMETHYL-2-THIOURIDINE BIOSYNTHESIS BIFUNCTIONAL PROTEIN MNMC"/>
    <property type="match status" value="1"/>
</dbReference>
<dbReference type="Pfam" id="PF01266">
    <property type="entry name" value="DAO"/>
    <property type="match status" value="1"/>
</dbReference>
<dbReference type="Pfam" id="PF05430">
    <property type="entry name" value="Methyltransf_30"/>
    <property type="match status" value="1"/>
</dbReference>
<dbReference type="SUPFAM" id="SSF54373">
    <property type="entry name" value="FAD-linked reductases, C-terminal domain"/>
    <property type="match status" value="1"/>
</dbReference>
<dbReference type="SUPFAM" id="SSF51905">
    <property type="entry name" value="FAD/NAD(P)-binding domain"/>
    <property type="match status" value="1"/>
</dbReference>
<keyword id="KW-0963">Cytoplasm</keyword>
<keyword id="KW-0274">FAD</keyword>
<keyword id="KW-0285">Flavoprotein</keyword>
<keyword id="KW-0489">Methyltransferase</keyword>
<keyword id="KW-0511">Multifunctional enzyme</keyword>
<keyword id="KW-0560">Oxidoreductase</keyword>
<keyword id="KW-0949">S-adenosyl-L-methionine</keyword>
<keyword id="KW-0808">Transferase</keyword>
<keyword id="KW-0819">tRNA processing</keyword>
<reference key="1">
    <citation type="journal article" date="2005" name="BMC Genomics">
        <title>Bacterial genome adaptation to niches: divergence of the potential virulence genes in three Burkholderia species of different survival strategies.</title>
        <authorList>
            <person name="Kim H.S."/>
            <person name="Schell M.A."/>
            <person name="Yu Y."/>
            <person name="Ulrich R.L."/>
            <person name="Sarria S.H."/>
            <person name="Nierman W.C."/>
            <person name="DeShazer D."/>
        </authorList>
    </citation>
    <scope>NUCLEOTIDE SEQUENCE [LARGE SCALE GENOMIC DNA]</scope>
    <source>
        <strain>ATCC 700388 / DSM 13276 / CCUG 48851 / CIP 106301 / E264</strain>
    </source>
</reference>
<sequence>MTDRIVPATLVFREDGTVVSPLYGDIYHSAAGALAQADHVFIRGNDLPERWRHKRTFTIVETGFGTGCNFLATWAAWRADPSHCERLHFVSVEKHPFARDDLRRAAAHIVAYTTIEPLVDALANAWPALTPGVHRLEFDEGRVTLTLAFGDALDVLPNLALRADAFYLDGFAPSKNADLWSPAIFKSLAKLADEHATFATYTSSGAVKRALDEAGFAYRKVEGFAGKRAMLVGEFAPRWRVRRHEPPRALDVGTRDAIVIGAGLAGCAAVERLAARGWHVTLIERRERIASEASGNPAGVFHPMIARDDNLAARLSRAGFLHALNRWRALEHAGHTFARSAHGLVQLATSADEFELMRESVDTLGVPSELARTLSRDDAQALLRTDIAHGGWLFPQGGSISPAALAAAQCAAAGDRLSRIAGVEVARLERGGDGRWLALDASGATIAQASVVIVANAADAARVAGLRHAPTQRVRGQLTLLPPGSAPAVPLPAIGDGYVVPLANGVTLTGATYEPDDADTTLREAGHRENLERLERLLPAFSAHALDAHALAGRVGFRCVASDRLPLVGELGDEAAAARDAAALTGARLRDVPRAAGLYGAFGYGSRGLVWAALGAELIAAQIEGEPWPLERELAEAIDPARFLIRALRRGRVA</sequence>
<gene>
    <name evidence="1" type="primary">mnmC</name>
    <name type="ordered locus">BTH_I0003</name>
</gene>